<reference key="1">
    <citation type="journal article" date="2005" name="Genome Res.">
        <title>Comparative and functional genomic analyses of the pathogenicity of phytopathogen Xanthomonas campestris pv. campestris.</title>
        <authorList>
            <person name="Qian W."/>
            <person name="Jia Y."/>
            <person name="Ren S.-X."/>
            <person name="He Y.-Q."/>
            <person name="Feng J.-X."/>
            <person name="Lu L.-F."/>
            <person name="Sun Q."/>
            <person name="Ying G."/>
            <person name="Tang D.-J."/>
            <person name="Tang H."/>
            <person name="Wu W."/>
            <person name="Hao P."/>
            <person name="Wang L."/>
            <person name="Jiang B.-L."/>
            <person name="Zeng S."/>
            <person name="Gu W.-Y."/>
            <person name="Lu G."/>
            <person name="Rong L."/>
            <person name="Tian Y."/>
            <person name="Yao Z."/>
            <person name="Fu G."/>
            <person name="Chen B."/>
            <person name="Fang R."/>
            <person name="Qiang B."/>
            <person name="Chen Z."/>
            <person name="Zhao G.-P."/>
            <person name="Tang J.-L."/>
            <person name="He C."/>
        </authorList>
    </citation>
    <scope>NUCLEOTIDE SEQUENCE [LARGE SCALE GENOMIC DNA]</scope>
    <source>
        <strain>8004</strain>
    </source>
</reference>
<accession>Q4UU98</accession>
<proteinExistence type="inferred from homology"/>
<evidence type="ECO:0000255" key="1">
    <source>
        <dbReference type="HAMAP-Rule" id="MF_01440"/>
    </source>
</evidence>
<protein>
    <recommendedName>
        <fullName evidence="1">Probable chemoreceptor glutamine deamidase CheD</fullName>
        <ecNumber evidence="1">3.5.1.44</ecNumber>
    </recommendedName>
</protein>
<comment type="function">
    <text evidence="1">Probably deamidates glutamine residues to glutamate on methyl-accepting chemotaxis receptors (MCPs), playing an important role in chemotaxis.</text>
</comment>
<comment type="catalytic activity">
    <reaction evidence="1">
        <text>L-glutaminyl-[protein] + H2O = L-glutamyl-[protein] + NH4(+)</text>
        <dbReference type="Rhea" id="RHEA:16441"/>
        <dbReference type="Rhea" id="RHEA-COMP:10207"/>
        <dbReference type="Rhea" id="RHEA-COMP:10208"/>
        <dbReference type="ChEBI" id="CHEBI:15377"/>
        <dbReference type="ChEBI" id="CHEBI:28938"/>
        <dbReference type="ChEBI" id="CHEBI:29973"/>
        <dbReference type="ChEBI" id="CHEBI:30011"/>
        <dbReference type="EC" id="3.5.1.44"/>
    </reaction>
</comment>
<comment type="similarity">
    <text evidence="1">Belongs to the CheD family.</text>
</comment>
<gene>
    <name evidence="1" type="primary">cheD</name>
    <name type="ordered locus">XC_2322</name>
</gene>
<sequence>MSTAVQVDDVMRYRDSRFQTIAAKLLPTQYLVVDDDTALTTTLGSCVAACLRDPVLKIGGMNHFLLPEGQVGDGAPARYGSYAMELLINDMLKRGAHRKRIEAKVFGGANVLKGFTSNPVGTRNAEFVRQYLQAEHIPIIAEDLCGIHPRKVWFFPTTGRVVVQRLPHAHEAEVAAAESAVRARLSKAPVTGGVELFE</sequence>
<organism>
    <name type="scientific">Xanthomonas campestris pv. campestris (strain 8004)</name>
    <dbReference type="NCBI Taxonomy" id="314565"/>
    <lineage>
        <taxon>Bacteria</taxon>
        <taxon>Pseudomonadati</taxon>
        <taxon>Pseudomonadota</taxon>
        <taxon>Gammaproteobacteria</taxon>
        <taxon>Lysobacterales</taxon>
        <taxon>Lysobacteraceae</taxon>
        <taxon>Xanthomonas</taxon>
    </lineage>
</organism>
<feature type="chain" id="PRO_0000251081" description="Probable chemoreceptor glutamine deamidase CheD">
    <location>
        <begin position="1"/>
        <end position="198"/>
    </location>
</feature>
<dbReference type="EC" id="3.5.1.44" evidence="1"/>
<dbReference type="EMBL" id="CP000050">
    <property type="protein sequence ID" value="AAY49375.1"/>
    <property type="molecule type" value="Genomic_DNA"/>
</dbReference>
<dbReference type="RefSeq" id="WP_011037037.1">
    <property type="nucleotide sequence ID" value="NZ_CP155948.1"/>
</dbReference>
<dbReference type="SMR" id="Q4UU98"/>
<dbReference type="GeneID" id="58013584"/>
<dbReference type="KEGG" id="xcb:XC_2322"/>
<dbReference type="HOGENOM" id="CLU_087854_0_0_6"/>
<dbReference type="Proteomes" id="UP000000420">
    <property type="component" value="Chromosome"/>
</dbReference>
<dbReference type="GO" id="GO:0050568">
    <property type="term" value="F:protein-glutamine glutaminase activity"/>
    <property type="evidence" value="ECO:0007669"/>
    <property type="project" value="UniProtKB-UniRule"/>
</dbReference>
<dbReference type="GO" id="GO:0006935">
    <property type="term" value="P:chemotaxis"/>
    <property type="evidence" value="ECO:0007669"/>
    <property type="project" value="UniProtKB-UniRule"/>
</dbReference>
<dbReference type="CDD" id="cd16352">
    <property type="entry name" value="CheD"/>
    <property type="match status" value="1"/>
</dbReference>
<dbReference type="Gene3D" id="3.30.1330.200">
    <property type="match status" value="1"/>
</dbReference>
<dbReference type="HAMAP" id="MF_01440">
    <property type="entry name" value="CheD"/>
    <property type="match status" value="1"/>
</dbReference>
<dbReference type="InterPro" id="IPR038592">
    <property type="entry name" value="CheD-like_sf"/>
</dbReference>
<dbReference type="InterPro" id="IPR005659">
    <property type="entry name" value="Chemorcpt_Glu_NH3ase_CheD"/>
</dbReference>
<dbReference type="InterPro" id="IPR011324">
    <property type="entry name" value="Cytotoxic_necrot_fac-like_cat"/>
</dbReference>
<dbReference type="NCBIfam" id="NF010013">
    <property type="entry name" value="PRK13487.1"/>
    <property type="match status" value="1"/>
</dbReference>
<dbReference type="PANTHER" id="PTHR35147">
    <property type="entry name" value="CHEMORECEPTOR GLUTAMINE DEAMIDASE CHED-RELATED"/>
    <property type="match status" value="1"/>
</dbReference>
<dbReference type="PANTHER" id="PTHR35147:SF2">
    <property type="entry name" value="CHEMORECEPTOR GLUTAMINE DEAMIDASE CHED-RELATED"/>
    <property type="match status" value="1"/>
</dbReference>
<dbReference type="Pfam" id="PF03975">
    <property type="entry name" value="CheD"/>
    <property type="match status" value="1"/>
</dbReference>
<dbReference type="SUPFAM" id="SSF64438">
    <property type="entry name" value="CNF1/YfiH-like putative cysteine hydrolases"/>
    <property type="match status" value="1"/>
</dbReference>
<keyword id="KW-0145">Chemotaxis</keyword>
<keyword id="KW-0378">Hydrolase</keyword>
<name>CHED_XANC8</name>